<feature type="chain" id="PRO_1000087496" description="tRNA N6-adenosine threonylcarbamoyltransferase">
    <location>
        <begin position="1"/>
        <end position="336"/>
    </location>
</feature>
<feature type="binding site" evidence="1">
    <location>
        <position position="114"/>
    </location>
    <ligand>
        <name>Fe cation</name>
        <dbReference type="ChEBI" id="CHEBI:24875"/>
    </ligand>
</feature>
<feature type="binding site" evidence="1">
    <location>
        <position position="118"/>
    </location>
    <ligand>
        <name>Fe cation</name>
        <dbReference type="ChEBI" id="CHEBI:24875"/>
    </ligand>
</feature>
<feature type="binding site" evidence="1">
    <location>
        <begin position="136"/>
        <end position="140"/>
    </location>
    <ligand>
        <name>substrate</name>
    </ligand>
</feature>
<feature type="binding site" evidence="1">
    <location>
        <position position="169"/>
    </location>
    <ligand>
        <name>substrate</name>
    </ligand>
</feature>
<feature type="binding site" evidence="1">
    <location>
        <position position="182"/>
    </location>
    <ligand>
        <name>substrate</name>
    </ligand>
</feature>
<feature type="binding site" evidence="1">
    <location>
        <position position="186"/>
    </location>
    <ligand>
        <name>substrate</name>
    </ligand>
</feature>
<feature type="binding site" evidence="1">
    <location>
        <position position="275"/>
    </location>
    <ligand>
        <name>substrate</name>
    </ligand>
</feature>
<feature type="binding site" evidence="1">
    <location>
        <position position="301"/>
    </location>
    <ligand>
        <name>Fe cation</name>
        <dbReference type="ChEBI" id="CHEBI:24875"/>
    </ligand>
</feature>
<accession>A8AUT2</accession>
<sequence>MKDRYILAFETSCDETSVAVLKNETELLSNVIASQIESHKRFGGVVPEVASRHHVEVITVCIEEALAEAGISEEQVTAVAVTYGPGLVGALLVGLAAAKSFAWAHDIPLIPVNHMAGHLMAAQSVEPLEFPLLALLVSGGHTELVYVSQAGDYKIVGETRDDAVGEAYDKVGRVMGLTYPAGREIDQLAHQGRDMYDFPRAMIKEDNLEFSFSGLKSAFINLHHNAQQKGEALSNQDLSASFQAAVMDILMAKTKKALEKYPVKTLVVAGGVAANQGLRERLAAEIQDVKVIIPPLRLCGDNAGMIAYASVSEWNKKNFAGLDLNAKPSLAFETME</sequence>
<organism>
    <name type="scientific">Streptococcus gordonii (strain Challis / ATCC 35105 / BCRC 15272 / CH1 / DL1 / V288)</name>
    <dbReference type="NCBI Taxonomy" id="467705"/>
    <lineage>
        <taxon>Bacteria</taxon>
        <taxon>Bacillati</taxon>
        <taxon>Bacillota</taxon>
        <taxon>Bacilli</taxon>
        <taxon>Lactobacillales</taxon>
        <taxon>Streptococcaceae</taxon>
        <taxon>Streptococcus</taxon>
    </lineage>
</organism>
<protein>
    <recommendedName>
        <fullName evidence="1">tRNA N6-adenosine threonylcarbamoyltransferase</fullName>
        <ecNumber evidence="1">2.3.1.234</ecNumber>
    </recommendedName>
    <alternativeName>
        <fullName evidence="1">N6-L-threonylcarbamoyladenine synthase</fullName>
        <shortName evidence="1">t(6)A synthase</shortName>
    </alternativeName>
    <alternativeName>
        <fullName evidence="1">t(6)A37 threonylcarbamoyladenosine biosynthesis protein TsaD</fullName>
    </alternativeName>
    <alternativeName>
        <fullName evidence="1">tRNA threonylcarbamoyladenosine biosynthesis protein TsaD</fullName>
    </alternativeName>
</protein>
<name>TSAD_STRGC</name>
<gene>
    <name evidence="1" type="primary">tsaD</name>
    <name type="synonym">gcp</name>
    <name type="ordered locus">SGO_0223</name>
</gene>
<evidence type="ECO:0000255" key="1">
    <source>
        <dbReference type="HAMAP-Rule" id="MF_01445"/>
    </source>
</evidence>
<dbReference type="EC" id="2.3.1.234" evidence="1"/>
<dbReference type="EMBL" id="CP000725">
    <property type="protein sequence ID" value="ABV10676.1"/>
    <property type="molecule type" value="Genomic_DNA"/>
</dbReference>
<dbReference type="RefSeq" id="WP_011999755.1">
    <property type="nucleotide sequence ID" value="NC_009785.1"/>
</dbReference>
<dbReference type="SMR" id="A8AUT2"/>
<dbReference type="STRING" id="467705.SGO_0223"/>
<dbReference type="KEGG" id="sgo:SGO_0223"/>
<dbReference type="eggNOG" id="COG0533">
    <property type="taxonomic scope" value="Bacteria"/>
</dbReference>
<dbReference type="HOGENOM" id="CLU_023208_0_1_9"/>
<dbReference type="Proteomes" id="UP000001131">
    <property type="component" value="Chromosome"/>
</dbReference>
<dbReference type="GO" id="GO:0005737">
    <property type="term" value="C:cytoplasm"/>
    <property type="evidence" value="ECO:0007669"/>
    <property type="project" value="UniProtKB-SubCell"/>
</dbReference>
<dbReference type="GO" id="GO:0005506">
    <property type="term" value="F:iron ion binding"/>
    <property type="evidence" value="ECO:0007669"/>
    <property type="project" value="UniProtKB-UniRule"/>
</dbReference>
<dbReference type="GO" id="GO:0061711">
    <property type="term" value="F:N(6)-L-threonylcarbamoyladenine synthase activity"/>
    <property type="evidence" value="ECO:0007669"/>
    <property type="project" value="UniProtKB-EC"/>
</dbReference>
<dbReference type="GO" id="GO:0002949">
    <property type="term" value="P:tRNA threonylcarbamoyladenosine modification"/>
    <property type="evidence" value="ECO:0007669"/>
    <property type="project" value="UniProtKB-UniRule"/>
</dbReference>
<dbReference type="CDD" id="cd24133">
    <property type="entry name" value="ASKHA_NBD_TsaD_bac"/>
    <property type="match status" value="1"/>
</dbReference>
<dbReference type="FunFam" id="3.30.420.40:FF:000012">
    <property type="entry name" value="tRNA N6-adenosine threonylcarbamoyltransferase"/>
    <property type="match status" value="1"/>
</dbReference>
<dbReference type="FunFam" id="3.30.420.40:FF:000040">
    <property type="entry name" value="tRNA N6-adenosine threonylcarbamoyltransferase"/>
    <property type="match status" value="1"/>
</dbReference>
<dbReference type="Gene3D" id="3.30.420.40">
    <property type="match status" value="2"/>
</dbReference>
<dbReference type="HAMAP" id="MF_01445">
    <property type="entry name" value="TsaD"/>
    <property type="match status" value="1"/>
</dbReference>
<dbReference type="InterPro" id="IPR043129">
    <property type="entry name" value="ATPase_NBD"/>
</dbReference>
<dbReference type="InterPro" id="IPR000905">
    <property type="entry name" value="Gcp-like_dom"/>
</dbReference>
<dbReference type="InterPro" id="IPR017861">
    <property type="entry name" value="KAE1/TsaD"/>
</dbReference>
<dbReference type="InterPro" id="IPR017860">
    <property type="entry name" value="Peptidase_M22_CS"/>
</dbReference>
<dbReference type="InterPro" id="IPR022450">
    <property type="entry name" value="TsaD"/>
</dbReference>
<dbReference type="NCBIfam" id="TIGR00329">
    <property type="entry name" value="gcp_kae1"/>
    <property type="match status" value="1"/>
</dbReference>
<dbReference type="NCBIfam" id="TIGR03723">
    <property type="entry name" value="T6A_TsaD_YgjD"/>
    <property type="match status" value="1"/>
</dbReference>
<dbReference type="PANTHER" id="PTHR11735">
    <property type="entry name" value="TRNA N6-ADENOSINE THREONYLCARBAMOYLTRANSFERASE"/>
    <property type="match status" value="1"/>
</dbReference>
<dbReference type="PANTHER" id="PTHR11735:SF6">
    <property type="entry name" value="TRNA N6-ADENOSINE THREONYLCARBAMOYLTRANSFERASE, MITOCHONDRIAL"/>
    <property type="match status" value="1"/>
</dbReference>
<dbReference type="Pfam" id="PF00814">
    <property type="entry name" value="TsaD"/>
    <property type="match status" value="1"/>
</dbReference>
<dbReference type="PRINTS" id="PR00789">
    <property type="entry name" value="OSIALOPTASE"/>
</dbReference>
<dbReference type="SUPFAM" id="SSF53067">
    <property type="entry name" value="Actin-like ATPase domain"/>
    <property type="match status" value="1"/>
</dbReference>
<dbReference type="PROSITE" id="PS01016">
    <property type="entry name" value="GLYCOPROTEASE"/>
    <property type="match status" value="1"/>
</dbReference>
<proteinExistence type="inferred from homology"/>
<reference key="1">
    <citation type="journal article" date="2007" name="J. Bacteriol.">
        <title>Genome-wide transcriptional changes in Streptococcus gordonii in response to competence signaling peptide.</title>
        <authorList>
            <person name="Vickerman M.M."/>
            <person name="Iobst S."/>
            <person name="Jesionowski A.M."/>
            <person name="Gill S.R."/>
        </authorList>
    </citation>
    <scope>NUCLEOTIDE SEQUENCE [LARGE SCALE GENOMIC DNA]</scope>
    <source>
        <strain>Challis / ATCC 35105 / BCRC 15272 / CH1 / DL1 / V288</strain>
    </source>
</reference>
<comment type="function">
    <text evidence="1">Required for the formation of a threonylcarbamoyl group on adenosine at position 37 (t(6)A37) in tRNAs that read codons beginning with adenine. Is involved in the transfer of the threonylcarbamoyl moiety of threonylcarbamoyl-AMP (TC-AMP) to the N6 group of A37, together with TsaE and TsaB. TsaD likely plays a direct catalytic role in this reaction.</text>
</comment>
<comment type="catalytic activity">
    <reaction evidence="1">
        <text>L-threonylcarbamoyladenylate + adenosine(37) in tRNA = N(6)-L-threonylcarbamoyladenosine(37) in tRNA + AMP + H(+)</text>
        <dbReference type="Rhea" id="RHEA:37059"/>
        <dbReference type="Rhea" id="RHEA-COMP:10162"/>
        <dbReference type="Rhea" id="RHEA-COMP:10163"/>
        <dbReference type="ChEBI" id="CHEBI:15378"/>
        <dbReference type="ChEBI" id="CHEBI:73682"/>
        <dbReference type="ChEBI" id="CHEBI:74411"/>
        <dbReference type="ChEBI" id="CHEBI:74418"/>
        <dbReference type="ChEBI" id="CHEBI:456215"/>
        <dbReference type="EC" id="2.3.1.234"/>
    </reaction>
</comment>
<comment type="cofactor">
    <cofactor evidence="1">
        <name>Fe(2+)</name>
        <dbReference type="ChEBI" id="CHEBI:29033"/>
    </cofactor>
    <text evidence="1">Binds 1 Fe(2+) ion per subunit.</text>
</comment>
<comment type="subcellular location">
    <subcellularLocation>
        <location evidence="1">Cytoplasm</location>
    </subcellularLocation>
</comment>
<comment type="similarity">
    <text evidence="1">Belongs to the KAE1 / TsaD family.</text>
</comment>
<keyword id="KW-0012">Acyltransferase</keyword>
<keyword id="KW-0963">Cytoplasm</keyword>
<keyword id="KW-0408">Iron</keyword>
<keyword id="KW-0479">Metal-binding</keyword>
<keyword id="KW-1185">Reference proteome</keyword>
<keyword id="KW-0808">Transferase</keyword>
<keyword id="KW-0819">tRNA processing</keyword>